<proteinExistence type="inferred from homology"/>
<gene>
    <name type="ordered locus">BC_0364</name>
</gene>
<keyword id="KW-0004">4Fe-4S</keyword>
<keyword id="KW-0408">Iron</keyword>
<keyword id="KW-0411">Iron-sulfur</keyword>
<keyword id="KW-0479">Metal-binding</keyword>
<keyword id="KW-0489">Methyltransferase</keyword>
<keyword id="KW-1185">Reference proteome</keyword>
<keyword id="KW-0949">S-adenosyl-L-methionine</keyword>
<keyword id="KW-0808">Transferase</keyword>
<name>Y364_BACCR</name>
<feature type="chain" id="PRO_0000161950" description="Uncharacterized RNA methyltransferase BC_0364">
    <location>
        <begin position="1"/>
        <end position="458"/>
    </location>
</feature>
<feature type="domain" description="TRAM" evidence="2">
    <location>
        <begin position="8"/>
        <end position="66"/>
    </location>
</feature>
<feature type="active site" description="Nucleophile" evidence="3">
    <location>
        <position position="415"/>
    </location>
</feature>
<feature type="binding site" evidence="1">
    <location>
        <position position="79"/>
    </location>
    <ligand>
        <name>[4Fe-4S] cluster</name>
        <dbReference type="ChEBI" id="CHEBI:49883"/>
    </ligand>
</feature>
<feature type="binding site" evidence="1">
    <location>
        <position position="85"/>
    </location>
    <ligand>
        <name>[4Fe-4S] cluster</name>
        <dbReference type="ChEBI" id="CHEBI:49883"/>
    </ligand>
</feature>
<feature type="binding site" evidence="1">
    <location>
        <position position="88"/>
    </location>
    <ligand>
        <name>[4Fe-4S] cluster</name>
        <dbReference type="ChEBI" id="CHEBI:49883"/>
    </ligand>
</feature>
<feature type="binding site" evidence="1">
    <location>
        <position position="166"/>
    </location>
    <ligand>
        <name>[4Fe-4S] cluster</name>
        <dbReference type="ChEBI" id="CHEBI:49883"/>
    </ligand>
</feature>
<feature type="binding site" evidence="3">
    <location>
        <position position="290"/>
    </location>
    <ligand>
        <name>S-adenosyl-L-methionine</name>
        <dbReference type="ChEBI" id="CHEBI:59789"/>
    </ligand>
</feature>
<feature type="binding site" evidence="3">
    <location>
        <position position="319"/>
    </location>
    <ligand>
        <name>S-adenosyl-L-methionine</name>
        <dbReference type="ChEBI" id="CHEBI:59789"/>
    </ligand>
</feature>
<feature type="binding site" evidence="3">
    <location>
        <position position="340"/>
    </location>
    <ligand>
        <name>S-adenosyl-L-methionine</name>
        <dbReference type="ChEBI" id="CHEBI:59789"/>
    </ligand>
</feature>
<feature type="binding site" evidence="3">
    <location>
        <position position="388"/>
    </location>
    <ligand>
        <name>S-adenosyl-L-methionine</name>
        <dbReference type="ChEBI" id="CHEBI:59789"/>
    </ligand>
</feature>
<dbReference type="EC" id="2.1.1.-"/>
<dbReference type="EMBL" id="AE016877">
    <property type="protein sequence ID" value="AAP07404.1"/>
    <property type="molecule type" value="Genomic_DNA"/>
</dbReference>
<dbReference type="RefSeq" id="NP_830203.1">
    <property type="nucleotide sequence ID" value="NC_004722.1"/>
</dbReference>
<dbReference type="SMR" id="Q814A6"/>
<dbReference type="STRING" id="226900.BC_0364"/>
<dbReference type="KEGG" id="bce:BC0364"/>
<dbReference type="PATRIC" id="fig|226900.8.peg.336"/>
<dbReference type="HOGENOM" id="CLU_014689_7_0_9"/>
<dbReference type="OrthoDB" id="9804590at2"/>
<dbReference type="Proteomes" id="UP000001417">
    <property type="component" value="Chromosome"/>
</dbReference>
<dbReference type="GO" id="GO:0051539">
    <property type="term" value="F:4 iron, 4 sulfur cluster binding"/>
    <property type="evidence" value="ECO:0007669"/>
    <property type="project" value="UniProtKB-KW"/>
</dbReference>
<dbReference type="GO" id="GO:0046872">
    <property type="term" value="F:metal ion binding"/>
    <property type="evidence" value="ECO:0007669"/>
    <property type="project" value="UniProtKB-KW"/>
</dbReference>
<dbReference type="GO" id="GO:0070041">
    <property type="term" value="F:rRNA (uridine-C5-)-methyltransferase activity"/>
    <property type="evidence" value="ECO:0000318"/>
    <property type="project" value="GO_Central"/>
</dbReference>
<dbReference type="GO" id="GO:0070475">
    <property type="term" value="P:rRNA base methylation"/>
    <property type="evidence" value="ECO:0000318"/>
    <property type="project" value="GO_Central"/>
</dbReference>
<dbReference type="CDD" id="cd02440">
    <property type="entry name" value="AdoMet_MTases"/>
    <property type="match status" value="1"/>
</dbReference>
<dbReference type="FunFam" id="3.40.50.150:FF:000009">
    <property type="entry name" value="23S rRNA (Uracil(1939)-C(5))-methyltransferase RlmD"/>
    <property type="match status" value="1"/>
</dbReference>
<dbReference type="FunFam" id="2.40.50.140:FF:000097">
    <property type="entry name" value="23S rRNA (uracil(1939)-C(5))-methyltransferase RlmD"/>
    <property type="match status" value="1"/>
</dbReference>
<dbReference type="FunFam" id="2.40.50.1070:FF:000003">
    <property type="entry name" value="23S rRNA (Uracil-5-)-methyltransferase RumA"/>
    <property type="match status" value="1"/>
</dbReference>
<dbReference type="Gene3D" id="2.40.50.1070">
    <property type="match status" value="1"/>
</dbReference>
<dbReference type="Gene3D" id="2.40.50.140">
    <property type="entry name" value="Nucleic acid-binding proteins"/>
    <property type="match status" value="1"/>
</dbReference>
<dbReference type="Gene3D" id="3.40.50.150">
    <property type="entry name" value="Vaccinia Virus protein VP39"/>
    <property type="match status" value="1"/>
</dbReference>
<dbReference type="InterPro" id="IPR030390">
    <property type="entry name" value="MeTrfase_TrmA_AS"/>
</dbReference>
<dbReference type="InterPro" id="IPR030391">
    <property type="entry name" value="MeTrfase_TrmA_CS"/>
</dbReference>
<dbReference type="InterPro" id="IPR012340">
    <property type="entry name" value="NA-bd_OB-fold"/>
</dbReference>
<dbReference type="InterPro" id="IPR029063">
    <property type="entry name" value="SAM-dependent_MTases_sf"/>
</dbReference>
<dbReference type="InterPro" id="IPR002792">
    <property type="entry name" value="TRAM_dom"/>
</dbReference>
<dbReference type="InterPro" id="IPR056743">
    <property type="entry name" value="TRM5-TYW2-like_MTfase"/>
</dbReference>
<dbReference type="InterPro" id="IPR010280">
    <property type="entry name" value="U5_MeTrfase_fam"/>
</dbReference>
<dbReference type="NCBIfam" id="TIGR00479">
    <property type="entry name" value="rumA"/>
    <property type="match status" value="1"/>
</dbReference>
<dbReference type="PANTHER" id="PTHR11061">
    <property type="entry name" value="RNA M5U METHYLTRANSFERASE"/>
    <property type="match status" value="1"/>
</dbReference>
<dbReference type="PANTHER" id="PTHR11061:SF30">
    <property type="entry name" value="TRNA (URACIL(54)-C(5))-METHYLTRANSFERASE"/>
    <property type="match status" value="1"/>
</dbReference>
<dbReference type="Pfam" id="PF01938">
    <property type="entry name" value="TRAM"/>
    <property type="match status" value="1"/>
</dbReference>
<dbReference type="Pfam" id="PF02475">
    <property type="entry name" value="TRM5-TYW2_MTfase"/>
    <property type="match status" value="1"/>
</dbReference>
<dbReference type="Pfam" id="PF05958">
    <property type="entry name" value="tRNA_U5-meth_tr"/>
    <property type="match status" value="1"/>
</dbReference>
<dbReference type="SUPFAM" id="SSF50249">
    <property type="entry name" value="Nucleic acid-binding proteins"/>
    <property type="match status" value="1"/>
</dbReference>
<dbReference type="SUPFAM" id="SSF53335">
    <property type="entry name" value="S-adenosyl-L-methionine-dependent methyltransferases"/>
    <property type="match status" value="1"/>
</dbReference>
<dbReference type="PROSITE" id="PS51687">
    <property type="entry name" value="SAM_MT_RNA_M5U"/>
    <property type="match status" value="1"/>
</dbReference>
<dbReference type="PROSITE" id="PS50926">
    <property type="entry name" value="TRAM"/>
    <property type="match status" value="1"/>
</dbReference>
<dbReference type="PROSITE" id="PS01230">
    <property type="entry name" value="TRMA_1"/>
    <property type="match status" value="1"/>
</dbReference>
<dbReference type="PROSITE" id="PS01231">
    <property type="entry name" value="TRMA_2"/>
    <property type="match status" value="1"/>
</dbReference>
<accession>Q814A6</accession>
<sequence>MSTKMTPPVEKNEFIDVVFEDLTHDGAGVAKVKGYPIFVKNGLPGEEAQIKIIKVKKNFAFGRLMKLHTESPYRKDAECPVYNQCGGCQLQHLTYEGQLQAKEKQVRDVMQRIGGLADVPVHPVLGMKNPWVYRNKAQVPIGEREGGLVAGFYRQGTHDIINMESCLIQAEENDTLIQEVKRICEKHGITAYNEERNKGTLRHVMARYGQVTGEIMLVFITRTAELPNKKAIIEEIAAKFPEVKSIVQNVNTKRTNVIFGDKTTVLYGSEYIYDFIGDIKFAISARSFYQVNPEQTKVLYDKTLEYAKLNGNETVIDAYCGIGSISLFLAQKAKKVYGVEIVPEAIEDANRNAALNNMTNAEFGVGEAEVVIPKWYKEGVIADTMVVDPPRKGCDEALLNTIIDMKPNRVVYVSCNPATLARDLKVLEEGGYKTQEVQPVDMFPHTTHVECVAWLKLV</sequence>
<comment type="similarity">
    <text evidence="3">Belongs to the class I-like SAM-binding methyltransferase superfamily. RNA M5U methyltransferase family.</text>
</comment>
<organism>
    <name type="scientific">Bacillus cereus (strain ATCC 14579 / DSM 31 / CCUG 7414 / JCM 2152 / NBRC 15305 / NCIMB 9373 / NCTC 2599 / NRRL B-3711)</name>
    <dbReference type="NCBI Taxonomy" id="226900"/>
    <lineage>
        <taxon>Bacteria</taxon>
        <taxon>Bacillati</taxon>
        <taxon>Bacillota</taxon>
        <taxon>Bacilli</taxon>
        <taxon>Bacillales</taxon>
        <taxon>Bacillaceae</taxon>
        <taxon>Bacillus</taxon>
        <taxon>Bacillus cereus group</taxon>
    </lineage>
</organism>
<evidence type="ECO:0000250" key="1"/>
<evidence type="ECO:0000255" key="2">
    <source>
        <dbReference type="PROSITE-ProRule" id="PRU00208"/>
    </source>
</evidence>
<evidence type="ECO:0000255" key="3">
    <source>
        <dbReference type="PROSITE-ProRule" id="PRU01024"/>
    </source>
</evidence>
<protein>
    <recommendedName>
        <fullName>Uncharacterized RNA methyltransferase BC_0364</fullName>
        <ecNumber>2.1.1.-</ecNumber>
    </recommendedName>
</protein>
<reference key="1">
    <citation type="journal article" date="2003" name="Nature">
        <title>Genome sequence of Bacillus cereus and comparative analysis with Bacillus anthracis.</title>
        <authorList>
            <person name="Ivanova N."/>
            <person name="Sorokin A."/>
            <person name="Anderson I."/>
            <person name="Galleron N."/>
            <person name="Candelon B."/>
            <person name="Kapatral V."/>
            <person name="Bhattacharyya A."/>
            <person name="Reznik G."/>
            <person name="Mikhailova N."/>
            <person name="Lapidus A."/>
            <person name="Chu L."/>
            <person name="Mazur M."/>
            <person name="Goltsman E."/>
            <person name="Larsen N."/>
            <person name="D'Souza M."/>
            <person name="Walunas T."/>
            <person name="Grechkin Y."/>
            <person name="Pusch G."/>
            <person name="Haselkorn R."/>
            <person name="Fonstein M."/>
            <person name="Ehrlich S.D."/>
            <person name="Overbeek R."/>
            <person name="Kyrpides N.C."/>
        </authorList>
    </citation>
    <scope>NUCLEOTIDE SEQUENCE [LARGE SCALE GENOMIC DNA]</scope>
    <source>
        <strain>ATCC 14579 / DSM 31 / CCUG 7414 / JCM 2152 / NBRC 15305 / NCIMB 9373 / NCTC 2599 / NRRL B-3711</strain>
    </source>
</reference>